<name>TRPC_BORPD</name>
<accession>A9HY11</accession>
<sequence>MNDILAKILAVKAEEVATARQMRSEAELLREAQARQDVRGFAQAIEDKIAQGKAGVIAEIKKASPSKGVLRENFDPAAIAATYAVHGAACLSVLTDVQFFQGSHDNLRRARAACPLPVLRKDFVIDPYQVISARAMGADCVLLIVAALAPSQLRELETLAMELGMDVLVEVHDAKELDIALSLKTPLLGINNRNLRTFETSLQNTLNLLPQIPAGKRVITESGILSPEDVKLMRSHQVHAFLVGEAFMRAEDPGVELARLMG</sequence>
<organism>
    <name type="scientific">Bordetella petrii (strain ATCC BAA-461 / DSM 12804 / CCUG 43448)</name>
    <dbReference type="NCBI Taxonomy" id="340100"/>
    <lineage>
        <taxon>Bacteria</taxon>
        <taxon>Pseudomonadati</taxon>
        <taxon>Pseudomonadota</taxon>
        <taxon>Betaproteobacteria</taxon>
        <taxon>Burkholderiales</taxon>
        <taxon>Alcaligenaceae</taxon>
        <taxon>Bordetella</taxon>
    </lineage>
</organism>
<dbReference type="EC" id="4.1.1.48" evidence="1"/>
<dbReference type="EMBL" id="AM902716">
    <property type="protein sequence ID" value="CAP40649.1"/>
    <property type="molecule type" value="Genomic_DNA"/>
</dbReference>
<dbReference type="SMR" id="A9HY11"/>
<dbReference type="STRING" id="94624.Bpet0317"/>
<dbReference type="KEGG" id="bpt:Bpet0317"/>
<dbReference type="eggNOG" id="COG0134">
    <property type="taxonomic scope" value="Bacteria"/>
</dbReference>
<dbReference type="UniPathway" id="UPA00035">
    <property type="reaction ID" value="UER00043"/>
</dbReference>
<dbReference type="Proteomes" id="UP000001225">
    <property type="component" value="Chromosome"/>
</dbReference>
<dbReference type="GO" id="GO:0004425">
    <property type="term" value="F:indole-3-glycerol-phosphate synthase activity"/>
    <property type="evidence" value="ECO:0007669"/>
    <property type="project" value="UniProtKB-UniRule"/>
</dbReference>
<dbReference type="GO" id="GO:0004640">
    <property type="term" value="F:phosphoribosylanthranilate isomerase activity"/>
    <property type="evidence" value="ECO:0007669"/>
    <property type="project" value="TreeGrafter"/>
</dbReference>
<dbReference type="GO" id="GO:0000162">
    <property type="term" value="P:L-tryptophan biosynthetic process"/>
    <property type="evidence" value="ECO:0007669"/>
    <property type="project" value="UniProtKB-UniRule"/>
</dbReference>
<dbReference type="CDD" id="cd00331">
    <property type="entry name" value="IGPS"/>
    <property type="match status" value="1"/>
</dbReference>
<dbReference type="FunFam" id="3.20.20.70:FF:000024">
    <property type="entry name" value="Indole-3-glycerol phosphate synthase"/>
    <property type="match status" value="1"/>
</dbReference>
<dbReference type="Gene3D" id="3.20.20.70">
    <property type="entry name" value="Aldolase class I"/>
    <property type="match status" value="1"/>
</dbReference>
<dbReference type="HAMAP" id="MF_00134_B">
    <property type="entry name" value="IGPS_B"/>
    <property type="match status" value="1"/>
</dbReference>
<dbReference type="InterPro" id="IPR013785">
    <property type="entry name" value="Aldolase_TIM"/>
</dbReference>
<dbReference type="InterPro" id="IPR045186">
    <property type="entry name" value="Indole-3-glycerol_P_synth"/>
</dbReference>
<dbReference type="InterPro" id="IPR013798">
    <property type="entry name" value="Indole-3-glycerol_P_synth_dom"/>
</dbReference>
<dbReference type="InterPro" id="IPR001468">
    <property type="entry name" value="Indole-3-GlycerolPSynthase_CS"/>
</dbReference>
<dbReference type="InterPro" id="IPR011060">
    <property type="entry name" value="RibuloseP-bd_barrel"/>
</dbReference>
<dbReference type="NCBIfam" id="NF001373">
    <property type="entry name" value="PRK00278.1-6"/>
    <property type="match status" value="1"/>
</dbReference>
<dbReference type="NCBIfam" id="NF001377">
    <property type="entry name" value="PRK00278.2-4"/>
    <property type="match status" value="1"/>
</dbReference>
<dbReference type="PANTHER" id="PTHR22854:SF2">
    <property type="entry name" value="INDOLE-3-GLYCEROL-PHOSPHATE SYNTHASE"/>
    <property type="match status" value="1"/>
</dbReference>
<dbReference type="PANTHER" id="PTHR22854">
    <property type="entry name" value="TRYPTOPHAN BIOSYNTHESIS PROTEIN"/>
    <property type="match status" value="1"/>
</dbReference>
<dbReference type="Pfam" id="PF00218">
    <property type="entry name" value="IGPS"/>
    <property type="match status" value="1"/>
</dbReference>
<dbReference type="SUPFAM" id="SSF51366">
    <property type="entry name" value="Ribulose-phoshate binding barrel"/>
    <property type="match status" value="1"/>
</dbReference>
<dbReference type="PROSITE" id="PS00614">
    <property type="entry name" value="IGPS"/>
    <property type="match status" value="1"/>
</dbReference>
<gene>
    <name evidence="1" type="primary">trpC</name>
    <name type="ordered locus">Bpet0317</name>
</gene>
<comment type="catalytic activity">
    <reaction evidence="1">
        <text>1-(2-carboxyphenylamino)-1-deoxy-D-ribulose 5-phosphate + H(+) = (1S,2R)-1-C-(indol-3-yl)glycerol 3-phosphate + CO2 + H2O</text>
        <dbReference type="Rhea" id="RHEA:23476"/>
        <dbReference type="ChEBI" id="CHEBI:15377"/>
        <dbReference type="ChEBI" id="CHEBI:15378"/>
        <dbReference type="ChEBI" id="CHEBI:16526"/>
        <dbReference type="ChEBI" id="CHEBI:58613"/>
        <dbReference type="ChEBI" id="CHEBI:58866"/>
        <dbReference type="EC" id="4.1.1.48"/>
    </reaction>
</comment>
<comment type="pathway">
    <text evidence="1">Amino-acid biosynthesis; L-tryptophan biosynthesis; L-tryptophan from chorismate: step 4/5.</text>
</comment>
<comment type="similarity">
    <text evidence="1">Belongs to the TrpC family.</text>
</comment>
<protein>
    <recommendedName>
        <fullName evidence="1">Indole-3-glycerol phosphate synthase</fullName>
        <shortName evidence="1">IGPS</shortName>
        <ecNumber evidence="1">4.1.1.48</ecNumber>
    </recommendedName>
</protein>
<proteinExistence type="inferred from homology"/>
<keyword id="KW-0028">Amino-acid biosynthesis</keyword>
<keyword id="KW-0057">Aromatic amino acid biosynthesis</keyword>
<keyword id="KW-0210">Decarboxylase</keyword>
<keyword id="KW-0456">Lyase</keyword>
<keyword id="KW-0822">Tryptophan biosynthesis</keyword>
<evidence type="ECO:0000255" key="1">
    <source>
        <dbReference type="HAMAP-Rule" id="MF_00134"/>
    </source>
</evidence>
<reference key="1">
    <citation type="journal article" date="2008" name="BMC Genomics">
        <title>The missing link: Bordetella petrii is endowed with both the metabolic versatility of environmental bacteria and virulence traits of pathogenic Bordetellae.</title>
        <authorList>
            <person name="Gross R."/>
            <person name="Guzman C.A."/>
            <person name="Sebaihia M."/>
            <person name="Martin dos Santos V.A.P."/>
            <person name="Pieper D.H."/>
            <person name="Koebnik R."/>
            <person name="Lechner M."/>
            <person name="Bartels D."/>
            <person name="Buhrmester J."/>
            <person name="Choudhuri J.V."/>
            <person name="Ebensen T."/>
            <person name="Gaigalat L."/>
            <person name="Herrmann S."/>
            <person name="Khachane A.N."/>
            <person name="Larisch C."/>
            <person name="Link S."/>
            <person name="Linke B."/>
            <person name="Meyer F."/>
            <person name="Mormann S."/>
            <person name="Nakunst D."/>
            <person name="Rueckert C."/>
            <person name="Schneiker-Bekel S."/>
            <person name="Schulze K."/>
            <person name="Voerholter F.-J."/>
            <person name="Yevsa T."/>
            <person name="Engle J.T."/>
            <person name="Goldman W.E."/>
            <person name="Puehler A."/>
            <person name="Goebel U.B."/>
            <person name="Goesmann A."/>
            <person name="Bloecker H."/>
            <person name="Kaiser O."/>
            <person name="Martinez-Arias R."/>
        </authorList>
    </citation>
    <scope>NUCLEOTIDE SEQUENCE [LARGE SCALE GENOMIC DNA]</scope>
    <source>
        <strain>ATCC BAA-461 / DSM 12804 / CCUG 43448</strain>
    </source>
</reference>
<feature type="chain" id="PRO_1000095851" description="Indole-3-glycerol phosphate synthase">
    <location>
        <begin position="1"/>
        <end position="262"/>
    </location>
</feature>